<proteinExistence type="inferred from homology"/>
<accession>Q4QMS5</accession>
<reference key="1">
    <citation type="journal article" date="2005" name="J. Bacteriol.">
        <title>Genomic sequence of an otitis media isolate of nontypeable Haemophilus influenzae: comparative study with H. influenzae serotype d, strain KW20.</title>
        <authorList>
            <person name="Harrison A."/>
            <person name="Dyer D.W."/>
            <person name="Gillaspy A."/>
            <person name="Ray W.C."/>
            <person name="Mungur R."/>
            <person name="Carson M.B."/>
            <person name="Zhong H."/>
            <person name="Gipson J."/>
            <person name="Gipson M."/>
            <person name="Johnson L.S."/>
            <person name="Lewis L."/>
            <person name="Bakaletz L.O."/>
            <person name="Munson R.S. Jr."/>
        </authorList>
    </citation>
    <scope>NUCLEOTIDE SEQUENCE [LARGE SCALE GENOMIC DNA]</scope>
    <source>
        <strain>86-028NP</strain>
    </source>
</reference>
<dbReference type="EC" id="2.7.7.23" evidence="1"/>
<dbReference type="EC" id="2.3.1.157" evidence="1"/>
<dbReference type="EMBL" id="CP000057">
    <property type="protein sequence ID" value="AAX87672.1"/>
    <property type="molecule type" value="Genomic_DNA"/>
</dbReference>
<dbReference type="RefSeq" id="WP_011272139.1">
    <property type="nucleotide sequence ID" value="NC_007146.2"/>
</dbReference>
<dbReference type="SMR" id="Q4QMS5"/>
<dbReference type="KEGG" id="hit:NTHI0762"/>
<dbReference type="HOGENOM" id="CLU_029499_15_2_6"/>
<dbReference type="UniPathway" id="UPA00113">
    <property type="reaction ID" value="UER00532"/>
</dbReference>
<dbReference type="UniPathway" id="UPA00113">
    <property type="reaction ID" value="UER00533"/>
</dbReference>
<dbReference type="UniPathway" id="UPA00973"/>
<dbReference type="Proteomes" id="UP000002525">
    <property type="component" value="Chromosome"/>
</dbReference>
<dbReference type="GO" id="GO:0005737">
    <property type="term" value="C:cytoplasm"/>
    <property type="evidence" value="ECO:0007669"/>
    <property type="project" value="UniProtKB-SubCell"/>
</dbReference>
<dbReference type="GO" id="GO:0016020">
    <property type="term" value="C:membrane"/>
    <property type="evidence" value="ECO:0007669"/>
    <property type="project" value="GOC"/>
</dbReference>
<dbReference type="GO" id="GO:0019134">
    <property type="term" value="F:glucosamine-1-phosphate N-acetyltransferase activity"/>
    <property type="evidence" value="ECO:0007669"/>
    <property type="project" value="UniProtKB-UniRule"/>
</dbReference>
<dbReference type="GO" id="GO:0000287">
    <property type="term" value="F:magnesium ion binding"/>
    <property type="evidence" value="ECO:0007669"/>
    <property type="project" value="UniProtKB-UniRule"/>
</dbReference>
<dbReference type="GO" id="GO:0003977">
    <property type="term" value="F:UDP-N-acetylglucosamine diphosphorylase activity"/>
    <property type="evidence" value="ECO:0007669"/>
    <property type="project" value="UniProtKB-UniRule"/>
</dbReference>
<dbReference type="GO" id="GO:0000902">
    <property type="term" value="P:cell morphogenesis"/>
    <property type="evidence" value="ECO:0007669"/>
    <property type="project" value="UniProtKB-UniRule"/>
</dbReference>
<dbReference type="GO" id="GO:0071555">
    <property type="term" value="P:cell wall organization"/>
    <property type="evidence" value="ECO:0007669"/>
    <property type="project" value="UniProtKB-KW"/>
</dbReference>
<dbReference type="GO" id="GO:0009245">
    <property type="term" value="P:lipid A biosynthetic process"/>
    <property type="evidence" value="ECO:0007669"/>
    <property type="project" value="UniProtKB-UniRule"/>
</dbReference>
<dbReference type="GO" id="GO:0009252">
    <property type="term" value="P:peptidoglycan biosynthetic process"/>
    <property type="evidence" value="ECO:0007669"/>
    <property type="project" value="UniProtKB-UniRule"/>
</dbReference>
<dbReference type="GO" id="GO:0008360">
    <property type="term" value="P:regulation of cell shape"/>
    <property type="evidence" value="ECO:0007669"/>
    <property type="project" value="UniProtKB-KW"/>
</dbReference>
<dbReference type="GO" id="GO:0006048">
    <property type="term" value="P:UDP-N-acetylglucosamine biosynthetic process"/>
    <property type="evidence" value="ECO:0007669"/>
    <property type="project" value="UniProtKB-UniPathway"/>
</dbReference>
<dbReference type="CDD" id="cd02540">
    <property type="entry name" value="GT2_GlmU_N_bac"/>
    <property type="match status" value="1"/>
</dbReference>
<dbReference type="CDD" id="cd03353">
    <property type="entry name" value="LbH_GlmU_C"/>
    <property type="match status" value="1"/>
</dbReference>
<dbReference type="FunFam" id="3.90.550.10:FF:000006">
    <property type="entry name" value="Bifunctional protein GlmU"/>
    <property type="match status" value="1"/>
</dbReference>
<dbReference type="Gene3D" id="2.160.10.10">
    <property type="entry name" value="Hexapeptide repeat proteins"/>
    <property type="match status" value="1"/>
</dbReference>
<dbReference type="Gene3D" id="3.90.550.10">
    <property type="entry name" value="Spore Coat Polysaccharide Biosynthesis Protein SpsA, Chain A"/>
    <property type="match status" value="1"/>
</dbReference>
<dbReference type="HAMAP" id="MF_01631">
    <property type="entry name" value="GlmU"/>
    <property type="match status" value="1"/>
</dbReference>
<dbReference type="InterPro" id="IPR005882">
    <property type="entry name" value="Bifunctional_GlmU"/>
</dbReference>
<dbReference type="InterPro" id="IPR050065">
    <property type="entry name" value="GlmU-like"/>
</dbReference>
<dbReference type="InterPro" id="IPR038009">
    <property type="entry name" value="GlmU_C_LbH"/>
</dbReference>
<dbReference type="InterPro" id="IPR001451">
    <property type="entry name" value="Hexapep"/>
</dbReference>
<dbReference type="InterPro" id="IPR018357">
    <property type="entry name" value="Hexapep_transf_CS"/>
</dbReference>
<dbReference type="InterPro" id="IPR025877">
    <property type="entry name" value="MobA-like_NTP_Trfase"/>
</dbReference>
<dbReference type="InterPro" id="IPR029044">
    <property type="entry name" value="Nucleotide-diphossugar_trans"/>
</dbReference>
<dbReference type="InterPro" id="IPR011004">
    <property type="entry name" value="Trimer_LpxA-like_sf"/>
</dbReference>
<dbReference type="NCBIfam" id="TIGR01173">
    <property type="entry name" value="glmU"/>
    <property type="match status" value="1"/>
</dbReference>
<dbReference type="NCBIfam" id="NF006986">
    <property type="entry name" value="PRK09451.1"/>
    <property type="match status" value="1"/>
</dbReference>
<dbReference type="PANTHER" id="PTHR43584:SF3">
    <property type="entry name" value="BIFUNCTIONAL PROTEIN GLMU"/>
    <property type="match status" value="1"/>
</dbReference>
<dbReference type="PANTHER" id="PTHR43584">
    <property type="entry name" value="NUCLEOTIDYL TRANSFERASE"/>
    <property type="match status" value="1"/>
</dbReference>
<dbReference type="Pfam" id="PF00132">
    <property type="entry name" value="Hexapep"/>
    <property type="match status" value="1"/>
</dbReference>
<dbReference type="Pfam" id="PF12804">
    <property type="entry name" value="NTP_transf_3"/>
    <property type="match status" value="1"/>
</dbReference>
<dbReference type="SUPFAM" id="SSF53448">
    <property type="entry name" value="Nucleotide-diphospho-sugar transferases"/>
    <property type="match status" value="1"/>
</dbReference>
<dbReference type="SUPFAM" id="SSF51161">
    <property type="entry name" value="Trimeric LpxA-like enzymes"/>
    <property type="match status" value="1"/>
</dbReference>
<dbReference type="PROSITE" id="PS00101">
    <property type="entry name" value="HEXAPEP_TRANSFERASES"/>
    <property type="match status" value="1"/>
</dbReference>
<organism>
    <name type="scientific">Haemophilus influenzae (strain 86-028NP)</name>
    <dbReference type="NCBI Taxonomy" id="281310"/>
    <lineage>
        <taxon>Bacteria</taxon>
        <taxon>Pseudomonadati</taxon>
        <taxon>Pseudomonadota</taxon>
        <taxon>Gammaproteobacteria</taxon>
        <taxon>Pasteurellales</taxon>
        <taxon>Pasteurellaceae</taxon>
        <taxon>Haemophilus</taxon>
    </lineage>
</organism>
<gene>
    <name evidence="1" type="primary">glmU</name>
    <name type="ordered locus">NTHI0762</name>
</gene>
<keyword id="KW-0012">Acyltransferase</keyword>
<keyword id="KW-0133">Cell shape</keyword>
<keyword id="KW-0961">Cell wall biogenesis/degradation</keyword>
<keyword id="KW-0963">Cytoplasm</keyword>
<keyword id="KW-0460">Magnesium</keyword>
<keyword id="KW-0479">Metal-binding</keyword>
<keyword id="KW-0511">Multifunctional enzyme</keyword>
<keyword id="KW-0548">Nucleotidyltransferase</keyword>
<keyword id="KW-0573">Peptidoglycan synthesis</keyword>
<keyword id="KW-0677">Repeat</keyword>
<keyword id="KW-0808">Transferase</keyword>
<sequence>MTKKALSAVILAAGKGTRMYSDLPKVLHTIAGKPMVKHVIDIAHQLGSENIHLIYGHGGDLMRTHLANEQVNWVLQTEQLGTAHAVQQAAPFFKDNENIVVLYGDAPLITKETLEKLIEAKPENGIALLTVNLDNPTGYGRIIRENGNVVAIVEQKDANAEQLNIKEVNTGVMVSDGASFKKWLARVGNNNAQGEYYLTDLIALANQDNCQVVAVQATDVMEVEGANNRLQLAALERYFQNKQASKLLLEGVMIYDPARFDLRGTLEHGKDVEIDVNVIIEGNVKLGDCVKIGAGCVLKNVVIGNDVEIKPYSVLEDSIVGEKAAIGPFSRLRPGAELAAETHVGNFVEIKKSTVGKGSKVNHLTYVGDSEIGSNCNIGAGVITCNYDGANKFKTIIGDDVFVGSDTQLVAPVKVANGATIGAGTTITRDVGENELVITRVAQRHIQGWQRPIKKK</sequence>
<name>GLMU_HAEI8</name>
<comment type="function">
    <text evidence="1">Catalyzes the last two sequential reactions in the de novo biosynthetic pathway for UDP-N-acetylglucosamine (UDP-GlcNAc). The C-terminal domain catalyzes the transfer of acetyl group from acetyl coenzyme A to glucosamine-1-phosphate (GlcN-1-P) to produce N-acetylglucosamine-1-phosphate (GlcNAc-1-P), which is converted into UDP-GlcNAc by the transfer of uridine 5-monophosphate (from uridine 5-triphosphate), a reaction catalyzed by the N-terminal domain.</text>
</comment>
<comment type="catalytic activity">
    <reaction evidence="1">
        <text>alpha-D-glucosamine 1-phosphate + acetyl-CoA = N-acetyl-alpha-D-glucosamine 1-phosphate + CoA + H(+)</text>
        <dbReference type="Rhea" id="RHEA:13725"/>
        <dbReference type="ChEBI" id="CHEBI:15378"/>
        <dbReference type="ChEBI" id="CHEBI:57287"/>
        <dbReference type="ChEBI" id="CHEBI:57288"/>
        <dbReference type="ChEBI" id="CHEBI:57776"/>
        <dbReference type="ChEBI" id="CHEBI:58516"/>
        <dbReference type="EC" id="2.3.1.157"/>
    </reaction>
</comment>
<comment type="catalytic activity">
    <reaction evidence="1">
        <text>N-acetyl-alpha-D-glucosamine 1-phosphate + UTP + H(+) = UDP-N-acetyl-alpha-D-glucosamine + diphosphate</text>
        <dbReference type="Rhea" id="RHEA:13509"/>
        <dbReference type="ChEBI" id="CHEBI:15378"/>
        <dbReference type="ChEBI" id="CHEBI:33019"/>
        <dbReference type="ChEBI" id="CHEBI:46398"/>
        <dbReference type="ChEBI" id="CHEBI:57705"/>
        <dbReference type="ChEBI" id="CHEBI:57776"/>
        <dbReference type="EC" id="2.7.7.23"/>
    </reaction>
</comment>
<comment type="cofactor">
    <cofactor evidence="1">
        <name>Mg(2+)</name>
        <dbReference type="ChEBI" id="CHEBI:18420"/>
    </cofactor>
    <text evidence="1">Binds 1 Mg(2+) ion per subunit.</text>
</comment>
<comment type="pathway">
    <text evidence="1">Nucleotide-sugar biosynthesis; UDP-N-acetyl-alpha-D-glucosamine biosynthesis; N-acetyl-alpha-D-glucosamine 1-phosphate from alpha-D-glucosamine 6-phosphate (route II): step 2/2.</text>
</comment>
<comment type="pathway">
    <text evidence="1">Nucleotide-sugar biosynthesis; UDP-N-acetyl-alpha-D-glucosamine biosynthesis; UDP-N-acetyl-alpha-D-glucosamine from N-acetyl-alpha-D-glucosamine 1-phosphate: step 1/1.</text>
</comment>
<comment type="pathway">
    <text evidence="1">Bacterial outer membrane biogenesis; LPS lipid A biosynthesis.</text>
</comment>
<comment type="subunit">
    <text evidence="1">Homotrimer.</text>
</comment>
<comment type="subcellular location">
    <subcellularLocation>
        <location evidence="1">Cytoplasm</location>
    </subcellularLocation>
</comment>
<comment type="similarity">
    <text evidence="1">In the N-terminal section; belongs to the N-acetylglucosamine-1-phosphate uridyltransferase family.</text>
</comment>
<comment type="similarity">
    <text evidence="1">In the C-terminal section; belongs to the transferase hexapeptide repeat family.</text>
</comment>
<feature type="chain" id="PRO_0000233780" description="Bifunctional protein GlmU">
    <location>
        <begin position="1"/>
        <end position="456"/>
    </location>
</feature>
<feature type="region of interest" description="Pyrophosphorylase" evidence="1">
    <location>
        <begin position="1"/>
        <end position="229"/>
    </location>
</feature>
<feature type="region of interest" description="Linker" evidence="1">
    <location>
        <begin position="230"/>
        <end position="250"/>
    </location>
</feature>
<feature type="region of interest" description="N-acetyltransferase" evidence="1">
    <location>
        <begin position="251"/>
        <end position="456"/>
    </location>
</feature>
<feature type="active site" description="Proton acceptor" evidence="1">
    <location>
        <position position="363"/>
    </location>
</feature>
<feature type="binding site" evidence="1">
    <location>
        <begin position="11"/>
        <end position="14"/>
    </location>
    <ligand>
        <name>UDP-N-acetyl-alpha-D-glucosamine</name>
        <dbReference type="ChEBI" id="CHEBI:57705"/>
    </ligand>
</feature>
<feature type="binding site" evidence="1">
    <location>
        <position position="25"/>
    </location>
    <ligand>
        <name>UDP-N-acetyl-alpha-D-glucosamine</name>
        <dbReference type="ChEBI" id="CHEBI:57705"/>
    </ligand>
</feature>
<feature type="binding site" evidence="1">
    <location>
        <position position="76"/>
    </location>
    <ligand>
        <name>UDP-N-acetyl-alpha-D-glucosamine</name>
        <dbReference type="ChEBI" id="CHEBI:57705"/>
    </ligand>
</feature>
<feature type="binding site" evidence="1">
    <location>
        <begin position="81"/>
        <end position="82"/>
    </location>
    <ligand>
        <name>UDP-N-acetyl-alpha-D-glucosamine</name>
        <dbReference type="ChEBI" id="CHEBI:57705"/>
    </ligand>
</feature>
<feature type="binding site" evidence="1">
    <location>
        <begin position="103"/>
        <end position="105"/>
    </location>
    <ligand>
        <name>UDP-N-acetyl-alpha-D-glucosamine</name>
        <dbReference type="ChEBI" id="CHEBI:57705"/>
    </ligand>
</feature>
<feature type="binding site" evidence="1">
    <location>
        <position position="105"/>
    </location>
    <ligand>
        <name>Mg(2+)</name>
        <dbReference type="ChEBI" id="CHEBI:18420"/>
    </ligand>
</feature>
<feature type="binding site" evidence="1">
    <location>
        <position position="140"/>
    </location>
    <ligand>
        <name>UDP-N-acetyl-alpha-D-glucosamine</name>
        <dbReference type="ChEBI" id="CHEBI:57705"/>
    </ligand>
</feature>
<feature type="binding site" evidence="1">
    <location>
        <position position="154"/>
    </location>
    <ligand>
        <name>UDP-N-acetyl-alpha-D-glucosamine</name>
        <dbReference type="ChEBI" id="CHEBI:57705"/>
    </ligand>
</feature>
<feature type="binding site" evidence="1">
    <location>
        <position position="169"/>
    </location>
    <ligand>
        <name>UDP-N-acetyl-alpha-D-glucosamine</name>
        <dbReference type="ChEBI" id="CHEBI:57705"/>
    </ligand>
</feature>
<feature type="binding site" evidence="1">
    <location>
        <position position="227"/>
    </location>
    <ligand>
        <name>Mg(2+)</name>
        <dbReference type="ChEBI" id="CHEBI:18420"/>
    </ligand>
</feature>
<feature type="binding site" evidence="1">
    <location>
        <position position="227"/>
    </location>
    <ligand>
        <name>UDP-N-acetyl-alpha-D-glucosamine</name>
        <dbReference type="ChEBI" id="CHEBI:57705"/>
    </ligand>
</feature>
<feature type="binding site" evidence="1">
    <location>
        <position position="333"/>
    </location>
    <ligand>
        <name>UDP-N-acetyl-alpha-D-glucosamine</name>
        <dbReference type="ChEBI" id="CHEBI:57705"/>
    </ligand>
</feature>
<feature type="binding site" evidence="1">
    <location>
        <position position="351"/>
    </location>
    <ligand>
        <name>UDP-N-acetyl-alpha-D-glucosamine</name>
        <dbReference type="ChEBI" id="CHEBI:57705"/>
    </ligand>
</feature>
<feature type="binding site" evidence="1">
    <location>
        <position position="366"/>
    </location>
    <ligand>
        <name>UDP-N-acetyl-alpha-D-glucosamine</name>
        <dbReference type="ChEBI" id="CHEBI:57705"/>
    </ligand>
</feature>
<feature type="binding site" evidence="1">
    <location>
        <position position="377"/>
    </location>
    <ligand>
        <name>UDP-N-acetyl-alpha-D-glucosamine</name>
        <dbReference type="ChEBI" id="CHEBI:57705"/>
    </ligand>
</feature>
<feature type="binding site" evidence="1">
    <location>
        <position position="380"/>
    </location>
    <ligand>
        <name>acetyl-CoA</name>
        <dbReference type="ChEBI" id="CHEBI:57288"/>
    </ligand>
</feature>
<feature type="binding site" evidence="1">
    <location>
        <begin position="386"/>
        <end position="387"/>
    </location>
    <ligand>
        <name>acetyl-CoA</name>
        <dbReference type="ChEBI" id="CHEBI:57288"/>
    </ligand>
</feature>
<feature type="binding site" evidence="1">
    <location>
        <position position="405"/>
    </location>
    <ligand>
        <name>acetyl-CoA</name>
        <dbReference type="ChEBI" id="CHEBI:57288"/>
    </ligand>
</feature>
<feature type="binding site" evidence="1">
    <location>
        <position position="423"/>
    </location>
    <ligand>
        <name>acetyl-CoA</name>
        <dbReference type="ChEBI" id="CHEBI:57288"/>
    </ligand>
</feature>
<feature type="binding site" evidence="1">
    <location>
        <position position="440"/>
    </location>
    <ligand>
        <name>acetyl-CoA</name>
        <dbReference type="ChEBI" id="CHEBI:57288"/>
    </ligand>
</feature>
<evidence type="ECO:0000255" key="1">
    <source>
        <dbReference type="HAMAP-Rule" id="MF_01631"/>
    </source>
</evidence>
<protein>
    <recommendedName>
        <fullName evidence="1">Bifunctional protein GlmU</fullName>
    </recommendedName>
    <domain>
        <recommendedName>
            <fullName evidence="1">UDP-N-acetylglucosamine pyrophosphorylase</fullName>
            <ecNumber evidence="1">2.7.7.23</ecNumber>
        </recommendedName>
        <alternativeName>
            <fullName evidence="1">N-acetylglucosamine-1-phosphate uridyltransferase</fullName>
        </alternativeName>
    </domain>
    <domain>
        <recommendedName>
            <fullName evidence="1">Glucosamine-1-phosphate N-acetyltransferase</fullName>
            <ecNumber evidence="1">2.3.1.157</ecNumber>
        </recommendedName>
    </domain>
</protein>